<proteinExistence type="inferred from homology"/>
<protein>
    <recommendedName>
        <fullName evidence="1">Threonine--tRNA ligase</fullName>
        <ecNumber evidence="1">6.1.1.3</ecNumber>
    </recommendedName>
    <alternativeName>
        <fullName evidence="1">Threonyl-tRNA synthetase</fullName>
        <shortName evidence="1">ThrRS</shortName>
    </alternativeName>
</protein>
<feature type="chain" id="PRO_1000020477" description="Threonine--tRNA ligase">
    <location>
        <begin position="1"/>
        <end position="640"/>
    </location>
</feature>
<feature type="domain" description="TGS" evidence="2">
    <location>
        <begin position="1"/>
        <end position="61"/>
    </location>
</feature>
<feature type="region of interest" description="Catalytic" evidence="1">
    <location>
        <begin position="242"/>
        <end position="533"/>
    </location>
</feature>
<feature type="binding site" evidence="1">
    <location>
        <position position="333"/>
    </location>
    <ligand>
        <name>Zn(2+)</name>
        <dbReference type="ChEBI" id="CHEBI:29105"/>
    </ligand>
</feature>
<feature type="binding site" evidence="1">
    <location>
        <position position="384"/>
    </location>
    <ligand>
        <name>Zn(2+)</name>
        <dbReference type="ChEBI" id="CHEBI:29105"/>
    </ligand>
</feature>
<feature type="binding site" evidence="1">
    <location>
        <position position="510"/>
    </location>
    <ligand>
        <name>Zn(2+)</name>
        <dbReference type="ChEBI" id="CHEBI:29105"/>
    </ligand>
</feature>
<name>SYT_STUS1</name>
<gene>
    <name evidence="1" type="primary">thrS</name>
    <name type="ordered locus">PST_2369</name>
</gene>
<organism>
    <name type="scientific">Stutzerimonas stutzeri (strain A1501)</name>
    <name type="common">Pseudomonas stutzeri</name>
    <dbReference type="NCBI Taxonomy" id="379731"/>
    <lineage>
        <taxon>Bacteria</taxon>
        <taxon>Pseudomonadati</taxon>
        <taxon>Pseudomonadota</taxon>
        <taxon>Gammaproteobacteria</taxon>
        <taxon>Pseudomonadales</taxon>
        <taxon>Pseudomonadaceae</taxon>
        <taxon>Stutzerimonas</taxon>
    </lineage>
</organism>
<comment type="function">
    <text evidence="1">Catalyzes the attachment of threonine to tRNA(Thr) in a two-step reaction: L-threonine is first activated by ATP to form Thr-AMP and then transferred to the acceptor end of tRNA(Thr). Also edits incorrectly charged L-seryl-tRNA(Thr).</text>
</comment>
<comment type="catalytic activity">
    <reaction evidence="1">
        <text>tRNA(Thr) + L-threonine + ATP = L-threonyl-tRNA(Thr) + AMP + diphosphate + H(+)</text>
        <dbReference type="Rhea" id="RHEA:24624"/>
        <dbReference type="Rhea" id="RHEA-COMP:9670"/>
        <dbReference type="Rhea" id="RHEA-COMP:9704"/>
        <dbReference type="ChEBI" id="CHEBI:15378"/>
        <dbReference type="ChEBI" id="CHEBI:30616"/>
        <dbReference type="ChEBI" id="CHEBI:33019"/>
        <dbReference type="ChEBI" id="CHEBI:57926"/>
        <dbReference type="ChEBI" id="CHEBI:78442"/>
        <dbReference type="ChEBI" id="CHEBI:78534"/>
        <dbReference type="ChEBI" id="CHEBI:456215"/>
        <dbReference type="EC" id="6.1.1.3"/>
    </reaction>
</comment>
<comment type="cofactor">
    <cofactor evidence="1">
        <name>Zn(2+)</name>
        <dbReference type="ChEBI" id="CHEBI:29105"/>
    </cofactor>
    <text evidence="1">Binds 1 zinc ion per subunit.</text>
</comment>
<comment type="subunit">
    <text evidence="1">Homodimer.</text>
</comment>
<comment type="subcellular location">
    <subcellularLocation>
        <location evidence="1">Cytoplasm</location>
    </subcellularLocation>
</comment>
<comment type="similarity">
    <text evidence="1">Belongs to the class-II aminoacyl-tRNA synthetase family.</text>
</comment>
<accession>A4VM22</accession>
<reference key="1">
    <citation type="journal article" date="2008" name="Proc. Natl. Acad. Sci. U.S.A.">
        <title>Nitrogen fixation island and rhizosphere competence traits in the genome of root-associated Pseudomonas stutzeri A1501.</title>
        <authorList>
            <person name="Yan Y."/>
            <person name="Yang J."/>
            <person name="Dou Y."/>
            <person name="Chen M."/>
            <person name="Ping S."/>
            <person name="Peng J."/>
            <person name="Lu W."/>
            <person name="Zhang W."/>
            <person name="Yao Z."/>
            <person name="Li H."/>
            <person name="Liu W."/>
            <person name="He S."/>
            <person name="Geng L."/>
            <person name="Zhang X."/>
            <person name="Yang F."/>
            <person name="Yu H."/>
            <person name="Zhan Y."/>
            <person name="Li D."/>
            <person name="Lin Z."/>
            <person name="Wang Y."/>
            <person name="Elmerich C."/>
            <person name="Lin M."/>
            <person name="Jin Q."/>
        </authorList>
    </citation>
    <scope>NUCLEOTIDE SEQUENCE [LARGE SCALE GENOMIC DNA]</scope>
    <source>
        <strain>A1501</strain>
    </source>
</reference>
<dbReference type="EC" id="6.1.1.3" evidence="1"/>
<dbReference type="EMBL" id="CP000304">
    <property type="protein sequence ID" value="ABP80023.1"/>
    <property type="molecule type" value="Genomic_DNA"/>
</dbReference>
<dbReference type="RefSeq" id="WP_011913486.1">
    <property type="nucleotide sequence ID" value="NC_009434.1"/>
</dbReference>
<dbReference type="SMR" id="A4VM22"/>
<dbReference type="KEGG" id="psa:PST_2369"/>
<dbReference type="eggNOG" id="COG0441">
    <property type="taxonomic scope" value="Bacteria"/>
</dbReference>
<dbReference type="HOGENOM" id="CLU_008554_3_1_6"/>
<dbReference type="Proteomes" id="UP000000233">
    <property type="component" value="Chromosome"/>
</dbReference>
<dbReference type="GO" id="GO:0005829">
    <property type="term" value="C:cytosol"/>
    <property type="evidence" value="ECO:0007669"/>
    <property type="project" value="TreeGrafter"/>
</dbReference>
<dbReference type="GO" id="GO:0005524">
    <property type="term" value="F:ATP binding"/>
    <property type="evidence" value="ECO:0007669"/>
    <property type="project" value="UniProtKB-UniRule"/>
</dbReference>
<dbReference type="GO" id="GO:0046872">
    <property type="term" value="F:metal ion binding"/>
    <property type="evidence" value="ECO:0007669"/>
    <property type="project" value="UniProtKB-KW"/>
</dbReference>
<dbReference type="GO" id="GO:0004829">
    <property type="term" value="F:threonine-tRNA ligase activity"/>
    <property type="evidence" value="ECO:0007669"/>
    <property type="project" value="UniProtKB-UniRule"/>
</dbReference>
<dbReference type="GO" id="GO:0000049">
    <property type="term" value="F:tRNA binding"/>
    <property type="evidence" value="ECO:0007669"/>
    <property type="project" value="UniProtKB-KW"/>
</dbReference>
<dbReference type="GO" id="GO:0006435">
    <property type="term" value="P:threonyl-tRNA aminoacylation"/>
    <property type="evidence" value="ECO:0007669"/>
    <property type="project" value="UniProtKB-UniRule"/>
</dbReference>
<dbReference type="CDD" id="cd01667">
    <property type="entry name" value="TGS_ThrRS"/>
    <property type="match status" value="1"/>
</dbReference>
<dbReference type="CDD" id="cd00860">
    <property type="entry name" value="ThrRS_anticodon"/>
    <property type="match status" value="1"/>
</dbReference>
<dbReference type="CDD" id="cd00771">
    <property type="entry name" value="ThrRS_core"/>
    <property type="match status" value="1"/>
</dbReference>
<dbReference type="FunFam" id="3.10.20.30:FF:000005">
    <property type="entry name" value="Threonine--tRNA ligase"/>
    <property type="match status" value="1"/>
</dbReference>
<dbReference type="FunFam" id="3.30.54.20:FF:000002">
    <property type="entry name" value="Threonine--tRNA ligase"/>
    <property type="match status" value="1"/>
</dbReference>
<dbReference type="FunFam" id="3.30.930.10:FF:000002">
    <property type="entry name" value="Threonine--tRNA ligase"/>
    <property type="match status" value="1"/>
</dbReference>
<dbReference type="FunFam" id="3.40.50.800:FF:000001">
    <property type="entry name" value="Threonine--tRNA ligase"/>
    <property type="match status" value="1"/>
</dbReference>
<dbReference type="FunFam" id="3.30.980.10:FF:000005">
    <property type="entry name" value="Threonyl-tRNA synthetase, mitochondrial"/>
    <property type="match status" value="1"/>
</dbReference>
<dbReference type="Gene3D" id="3.10.20.30">
    <property type="match status" value="1"/>
</dbReference>
<dbReference type="Gene3D" id="3.30.54.20">
    <property type="match status" value="1"/>
</dbReference>
<dbReference type="Gene3D" id="3.40.50.800">
    <property type="entry name" value="Anticodon-binding domain"/>
    <property type="match status" value="1"/>
</dbReference>
<dbReference type="Gene3D" id="3.30.930.10">
    <property type="entry name" value="Bira Bifunctional Protein, Domain 2"/>
    <property type="match status" value="1"/>
</dbReference>
<dbReference type="Gene3D" id="3.30.980.10">
    <property type="entry name" value="Threonyl-trna Synthetase, Chain A, domain 2"/>
    <property type="match status" value="1"/>
</dbReference>
<dbReference type="HAMAP" id="MF_00184">
    <property type="entry name" value="Thr_tRNA_synth"/>
    <property type="match status" value="1"/>
</dbReference>
<dbReference type="InterPro" id="IPR002314">
    <property type="entry name" value="aa-tRNA-synt_IIb"/>
</dbReference>
<dbReference type="InterPro" id="IPR006195">
    <property type="entry name" value="aa-tRNA-synth_II"/>
</dbReference>
<dbReference type="InterPro" id="IPR045864">
    <property type="entry name" value="aa-tRNA-synth_II/BPL/LPL"/>
</dbReference>
<dbReference type="InterPro" id="IPR004154">
    <property type="entry name" value="Anticodon-bd"/>
</dbReference>
<dbReference type="InterPro" id="IPR036621">
    <property type="entry name" value="Anticodon-bd_dom_sf"/>
</dbReference>
<dbReference type="InterPro" id="IPR012675">
    <property type="entry name" value="Beta-grasp_dom_sf"/>
</dbReference>
<dbReference type="InterPro" id="IPR004095">
    <property type="entry name" value="TGS"/>
</dbReference>
<dbReference type="InterPro" id="IPR012676">
    <property type="entry name" value="TGS-like"/>
</dbReference>
<dbReference type="InterPro" id="IPR002320">
    <property type="entry name" value="Thr-tRNA-ligase_IIa"/>
</dbReference>
<dbReference type="InterPro" id="IPR018163">
    <property type="entry name" value="Thr/Ala-tRNA-synth_IIc_edit"/>
</dbReference>
<dbReference type="InterPro" id="IPR047246">
    <property type="entry name" value="ThrRS_anticodon"/>
</dbReference>
<dbReference type="InterPro" id="IPR033728">
    <property type="entry name" value="ThrRS_core"/>
</dbReference>
<dbReference type="InterPro" id="IPR012947">
    <property type="entry name" value="tRNA_SAD"/>
</dbReference>
<dbReference type="NCBIfam" id="TIGR00418">
    <property type="entry name" value="thrS"/>
    <property type="match status" value="1"/>
</dbReference>
<dbReference type="PANTHER" id="PTHR11451:SF44">
    <property type="entry name" value="THREONINE--TRNA LIGASE, CHLOROPLASTIC_MITOCHONDRIAL 2"/>
    <property type="match status" value="1"/>
</dbReference>
<dbReference type="PANTHER" id="PTHR11451">
    <property type="entry name" value="THREONINE-TRNA LIGASE"/>
    <property type="match status" value="1"/>
</dbReference>
<dbReference type="Pfam" id="PF03129">
    <property type="entry name" value="HGTP_anticodon"/>
    <property type="match status" value="1"/>
</dbReference>
<dbReference type="Pfam" id="PF02824">
    <property type="entry name" value="TGS"/>
    <property type="match status" value="1"/>
</dbReference>
<dbReference type="Pfam" id="PF00587">
    <property type="entry name" value="tRNA-synt_2b"/>
    <property type="match status" value="1"/>
</dbReference>
<dbReference type="Pfam" id="PF07973">
    <property type="entry name" value="tRNA_SAD"/>
    <property type="match status" value="1"/>
</dbReference>
<dbReference type="PRINTS" id="PR01047">
    <property type="entry name" value="TRNASYNTHTHR"/>
</dbReference>
<dbReference type="SMART" id="SM00863">
    <property type="entry name" value="tRNA_SAD"/>
    <property type="match status" value="1"/>
</dbReference>
<dbReference type="SUPFAM" id="SSF52954">
    <property type="entry name" value="Class II aaRS ABD-related"/>
    <property type="match status" value="1"/>
</dbReference>
<dbReference type="SUPFAM" id="SSF55681">
    <property type="entry name" value="Class II aaRS and biotin synthetases"/>
    <property type="match status" value="1"/>
</dbReference>
<dbReference type="SUPFAM" id="SSF81271">
    <property type="entry name" value="TGS-like"/>
    <property type="match status" value="1"/>
</dbReference>
<dbReference type="SUPFAM" id="SSF55186">
    <property type="entry name" value="ThrRS/AlaRS common domain"/>
    <property type="match status" value="1"/>
</dbReference>
<dbReference type="PROSITE" id="PS50862">
    <property type="entry name" value="AA_TRNA_LIGASE_II"/>
    <property type="match status" value="1"/>
</dbReference>
<dbReference type="PROSITE" id="PS51880">
    <property type="entry name" value="TGS"/>
    <property type="match status" value="1"/>
</dbReference>
<sequence>MPTITLPDGSQRSFDHPVTVAEVAQSIGAGLAKATLAGKVDGKLVDACDLIERDASLQIITPKDEEGLEIIRHSCAHLVGHAVKQLYPNAKMVIGPVIDEGFYYDIAIDRPFTPEDMAAIEKRMAELIDKDYDVIKKVTPRAEVIEVFTSRGEDYKLRLVDDMPDEQAMGLYYHEEYVDMCRGPHVPNTRFLKAFKLTRISGAYWRGDSKNEQLQRIYGTAWADKKQLAAYIQRIEEAEKRDHRRIGKQLDLFHTQEEAPGMVFWHPAGWTLYQNLEQYMRQVQRENGYQEVRTPQVVDRILWEKSGHWSNYAENMFTTSSENRDYAVKPMNCPCHVQIFNQGLKSYRDLPLRMAEFGACHRNEPSGALHGIMRVRGFTQDDAHIFCTEEQVKKEAADFIKLTLKVYADFGFSDIAMKLSTRPAKRVGSDELWDRAEGALAEALNESGLAWEYQPGEGAFYGPKIEFTLRDCLGRNWQCGTLQYDPNLPERLDASYVAEDNSRQRPVMLHRAILGSFERFIGMLIEHYAGAFPAWLAPTQAVIMNITDKQAAFAIEVEKTLVQSGFRAKCDLRNEKIGFKIREHTLLKTPYLLVIGDREVETRSVAVRSREGVDMGSMPLEQFAQLLAQAVSRRGRQESE</sequence>
<evidence type="ECO:0000255" key="1">
    <source>
        <dbReference type="HAMAP-Rule" id="MF_00184"/>
    </source>
</evidence>
<evidence type="ECO:0000255" key="2">
    <source>
        <dbReference type="PROSITE-ProRule" id="PRU01228"/>
    </source>
</evidence>
<keyword id="KW-0030">Aminoacyl-tRNA synthetase</keyword>
<keyword id="KW-0067">ATP-binding</keyword>
<keyword id="KW-0963">Cytoplasm</keyword>
<keyword id="KW-0436">Ligase</keyword>
<keyword id="KW-0479">Metal-binding</keyword>
<keyword id="KW-0547">Nucleotide-binding</keyword>
<keyword id="KW-0648">Protein biosynthesis</keyword>
<keyword id="KW-1185">Reference proteome</keyword>
<keyword id="KW-0694">RNA-binding</keyword>
<keyword id="KW-0820">tRNA-binding</keyword>
<keyword id="KW-0862">Zinc</keyword>